<reference key="1">
    <citation type="journal article" date="2014" name="Fungal Genet. Biol.">
        <title>Molecular characterization of the PR-toxin gene cluster in Penicillium roqueforti and Penicillium chrysogenum: cross talk of secondary metabolite pathways.</title>
        <authorList>
            <person name="Hidalgo P.I."/>
            <person name="Ullan R.V."/>
            <person name="Albillos S.M."/>
            <person name="Montero O."/>
            <person name="Fernandez-Bodega M.A."/>
            <person name="Garcia-Estrada C."/>
            <person name="Fernandez-Aguado M."/>
            <person name="Martin J.F."/>
        </authorList>
    </citation>
    <scope>NUCLEOTIDE SEQUENCE [GENOMIC DNA]</scope>
    <scope>FUNCTION</scope>
    <scope>DISRUPTION PHENOTYPE</scope>
    <scope>PATHWAY</scope>
    <source>
        <strain>CECT 2905</strain>
    </source>
</reference>
<reference key="2">
    <citation type="journal article" date="1980" name="Appl. Environ. Microbiol.">
        <title>Production of eremofortins A, B, and C relative to formation of PR toxin by Penicillium roqueforti.</title>
        <authorList>
            <person name="Moreau S."/>
            <person name="Lablache-Combier A."/>
            <person name="Biguet J."/>
        </authorList>
    </citation>
    <scope>FUNCTION</scope>
</reference>
<reference key="3">
    <citation type="journal article" date="1993" name="J. Biol. Chem.">
        <title>Aristolochene synthase. Isolation, characterization, and bacterial expression of a sesquiterpenoid biosynthetic gene (Ari1) from Penicillium roqueforti.</title>
        <authorList>
            <person name="Proctor R.H."/>
            <person name="Hohn T.M."/>
        </authorList>
    </citation>
    <scope>FUNCTION</scope>
</reference>
<reference key="4">
    <citation type="journal article" date="2004" name="J. Am. Chem. Soc.">
        <title>Aristolochene synthase: mechanistic analysis of active site residues by site-directed mutagenesis.</title>
        <authorList>
            <person name="Felicetti B."/>
            <person name="Cane D.E."/>
        </authorList>
    </citation>
    <scope>FUNCTION</scope>
</reference>
<reference key="5">
    <citation type="journal article" date="2015" name="Angew. Chem. Int. Ed.">
        <title>Identification of intermediates in the biosynthesis of PR toxin by Penicillium roqueforti.</title>
        <authorList>
            <person name="Riclea R."/>
            <person name="Dickschat J.S."/>
        </authorList>
    </citation>
    <scope>FUNCTION</scope>
</reference>
<reference key="6">
    <citation type="journal article" date="2017" name="Appl. Microbiol. Biotechnol.">
        <title>Penicillium roqueforti PR toxin gene cluster characterization.</title>
        <authorList>
            <person name="Hidalgo P.I."/>
            <person name="Poirier E."/>
            <person name="Ullan R.V."/>
            <person name="Piqueras J."/>
            <person name="Meslet-Cladiere L."/>
            <person name="Coton E."/>
            <person name="Coton M."/>
        </authorList>
    </citation>
    <scope>FUNCTION</scope>
    <scope>PATHWAY</scope>
</reference>
<name>PRX3_PENRO</name>
<organism>
    <name type="scientific">Penicillium roqueforti</name>
    <dbReference type="NCBI Taxonomy" id="5082"/>
    <lineage>
        <taxon>Eukaryota</taxon>
        <taxon>Fungi</taxon>
        <taxon>Dikarya</taxon>
        <taxon>Ascomycota</taxon>
        <taxon>Pezizomycotina</taxon>
        <taxon>Eurotiomycetes</taxon>
        <taxon>Eurotiomycetidae</taxon>
        <taxon>Eurotiales</taxon>
        <taxon>Aspergillaceae</taxon>
        <taxon>Penicillium</taxon>
    </lineage>
</organism>
<feature type="signal peptide" evidence="2">
    <location>
        <begin position="1"/>
        <end position="19"/>
    </location>
</feature>
<feature type="chain" id="PRO_5001522121" description="FAD-dependent monooxygenase prx3" evidence="2">
    <location>
        <begin position="20"/>
        <end position="512"/>
    </location>
</feature>
<feature type="domain" description="FAD-binding PCMH-type" evidence="4">
    <location>
        <begin position="63"/>
        <end position="235"/>
    </location>
</feature>
<feature type="modified residue" description="Pros-8alpha-FAD histidine" evidence="1">
    <location>
        <position position="100"/>
    </location>
</feature>
<feature type="glycosylation site" description="N-linked (GlcNAc...) asparagine" evidence="3">
    <location>
        <position position="197"/>
    </location>
</feature>
<feature type="glycosylation site" description="N-linked (GlcNAc...) asparagine" evidence="3">
    <location>
        <position position="281"/>
    </location>
</feature>
<feature type="glycosylation site" description="N-linked (GlcNAc...) asparagine" evidence="3">
    <location>
        <position position="307"/>
    </location>
</feature>
<feature type="glycosylation site" description="N-linked (GlcNAc...) asparagine" evidence="3">
    <location>
        <position position="329"/>
    </location>
</feature>
<feature type="glycosylation site" description="N-linked (GlcNAc...) asparagine" evidence="3">
    <location>
        <position position="361"/>
    </location>
</feature>
<feature type="glycosylation site" description="N-linked (GlcNAc...) asparagine" evidence="3">
    <location>
        <position position="477"/>
    </location>
</feature>
<sequence length="512" mass="54663">MLSLKAFLALSLSIHLSQGLVASVSHRRANACTELSRSYPDSTIHPGSSVFAEDVIEPWSQTCQTTPTCVFAPASAEEVAGGLAILRKADQTFAVRTQGHMPIPGAADISNGVLMVTTSLNSVQYADDSKSVVQIGAGNRWLDVYKVLAKDNLAVVGGRFGQVGVSGLLLGGGISYFNSDHGWGANSVVNYEVVLANGTVCAANAQQNSDLYWALKGGSFNFGIVTRFDLATFSVPYMWGGSAFYDASALDPLVNAYASYAVASGGSSDPAAHSDPSILYNVTTGEVSGYGIYMHRGDDPAPAALKNFTDIPSTFQDFRVGKTILGLENDTTPVNFGVGNRRQLFSSTALASSAEAVYLVNQTFFDVIAANPQIKTTTDLSVTNTYQLFTPGMIRAAKASGGDPIGLYDPLGNGVLAVLYGGNWADAKDDEIIYKFFQDMIDELDNRAKKLGLYYDFVYLNDAAPTQTKDIFQKFSNGTALPKLREIAESYDPDQVFQTLTPGGFKLINSPA</sequence>
<keyword id="KW-0274">FAD</keyword>
<keyword id="KW-0285">Flavoprotein</keyword>
<keyword id="KW-0325">Glycoprotein</keyword>
<keyword id="KW-0560">Oxidoreductase</keyword>
<keyword id="KW-0732">Signal</keyword>
<dbReference type="EC" id="1.-.-.-" evidence="14"/>
<dbReference type="EMBL" id="KC013362">
    <property type="protein sequence ID" value="AGS83384.1"/>
    <property type="molecule type" value="Genomic_DNA"/>
</dbReference>
<dbReference type="SMR" id="A0A023I4D6"/>
<dbReference type="GlyCosmos" id="A0A023I4D6">
    <property type="glycosylation" value="6 sites, No reported glycans"/>
</dbReference>
<dbReference type="OMA" id="VRTQGHM"/>
<dbReference type="PhylomeDB" id="A0A023I4D6"/>
<dbReference type="GO" id="GO:0071949">
    <property type="term" value="F:FAD binding"/>
    <property type="evidence" value="ECO:0007669"/>
    <property type="project" value="InterPro"/>
</dbReference>
<dbReference type="GO" id="GO:0016491">
    <property type="term" value="F:oxidoreductase activity"/>
    <property type="evidence" value="ECO:0007669"/>
    <property type="project" value="UniProtKB-KW"/>
</dbReference>
<dbReference type="Gene3D" id="3.30.465.10">
    <property type="match status" value="1"/>
</dbReference>
<dbReference type="InterPro" id="IPR016166">
    <property type="entry name" value="FAD-bd_PCMH"/>
</dbReference>
<dbReference type="InterPro" id="IPR036318">
    <property type="entry name" value="FAD-bd_PCMH-like_sf"/>
</dbReference>
<dbReference type="InterPro" id="IPR016169">
    <property type="entry name" value="FAD-bd_PCMH_sub2"/>
</dbReference>
<dbReference type="InterPro" id="IPR050416">
    <property type="entry name" value="FAD-linked_Oxidoreductase"/>
</dbReference>
<dbReference type="InterPro" id="IPR006094">
    <property type="entry name" value="Oxid_FAD_bind_N"/>
</dbReference>
<dbReference type="PANTHER" id="PTHR42973">
    <property type="entry name" value="BINDING OXIDOREDUCTASE, PUTATIVE (AFU_ORTHOLOGUE AFUA_1G17690)-RELATED"/>
    <property type="match status" value="1"/>
</dbReference>
<dbReference type="PANTHER" id="PTHR42973:SF53">
    <property type="entry name" value="FAD-BINDING PCMH-TYPE DOMAIN-CONTAINING PROTEIN-RELATED"/>
    <property type="match status" value="1"/>
</dbReference>
<dbReference type="Pfam" id="PF01565">
    <property type="entry name" value="FAD_binding_4"/>
    <property type="match status" value="1"/>
</dbReference>
<dbReference type="SUPFAM" id="SSF56176">
    <property type="entry name" value="FAD-binding/transporter-associated domain-like"/>
    <property type="match status" value="1"/>
</dbReference>
<dbReference type="PROSITE" id="PS51387">
    <property type="entry name" value="FAD_PCMH"/>
    <property type="match status" value="1"/>
</dbReference>
<evidence type="ECO:0000250" key="1">
    <source>
        <dbReference type="UniProtKB" id="P08159"/>
    </source>
</evidence>
<evidence type="ECO:0000255" key="2"/>
<evidence type="ECO:0000255" key="3">
    <source>
        <dbReference type="PROSITE-ProRule" id="PRU00498"/>
    </source>
</evidence>
<evidence type="ECO:0000255" key="4">
    <source>
        <dbReference type="PROSITE-ProRule" id="PRU00718"/>
    </source>
</evidence>
<evidence type="ECO:0000269" key="5">
    <source>
    </source>
</evidence>
<evidence type="ECO:0000269" key="6">
    <source>
    </source>
</evidence>
<evidence type="ECO:0000269" key="7">
    <source>
    </source>
</evidence>
<evidence type="ECO:0000269" key="8">
    <source>
    </source>
</evidence>
<evidence type="ECO:0000269" key="9">
    <source>
    </source>
</evidence>
<evidence type="ECO:0000269" key="10">
    <source>
    </source>
</evidence>
<evidence type="ECO:0000303" key="11">
    <source>
    </source>
</evidence>
<evidence type="ECO:0000303" key="12">
    <source>
    </source>
</evidence>
<evidence type="ECO:0000305" key="13"/>
<evidence type="ECO:0000305" key="14">
    <source>
    </source>
</evidence>
<evidence type="ECO:0000305" key="15">
    <source>
    </source>
</evidence>
<accession>A0A023I4D6</accession>
<protein>
    <recommendedName>
        <fullName evidence="11">FAD-dependent monooxygenase prx3</fullName>
        <ecNumber evidence="14">1.-.-.-</ecNumber>
    </recommendedName>
    <alternativeName>
        <fullName evidence="11">PR-toxin biosynthesis cluster protein 3</fullName>
    </alternativeName>
</protein>
<proteinExistence type="inferred from homology"/>
<comment type="function">
    <text evidence="5 6 7 8 9 10">FAD-dependent monooxygenase; part of the gene cluster that mediates the biosynthesis of PR-toxin, a bicyclic sesquiterpene belonging to the eremophilane class and acting as a mycotoxin (PubMed:24239699, PubMed:27921136). The first step of the pathway is catalyzed by the aristolochene synthase which performs the cyclization of trans,trans-farnesyl diphosphate (FPP) to the bicyclic sesquiterpene aristolochene (PubMed:15186158, PubMed:24239699, PubMed:8440737). Following the formation of aristolochene, the non-oxygenated aristolochene is converted to the trioxygenated intermediate eremofortin B, via 7-epi-neopetasone (PubMed:24239699, PubMed:26274339). This conversion appears to involve three enzymes, a hydroxysterol oxidase-like enzyme, the quinone-oxidase prx3 that forms the quinone-type-structure in the bicyclic nucleus of aristolochene with the C8-oxo group and the C-3 hydroxyl group, and the P450 monooxygenase ORF6 that introduces the epoxide at the double bond between carbons 1 and 2 (PubMed:24239699, PubMed:27921136). No monoxy or dioxy-intermediates have been reported to be released to the broth, so these three early oxidative reactions may be coupled together (PubMed:24239699). Eremofortin B is further oxidized by another P450 monooxygenase, that introduces a second epoxide between carbons 7 and 11 prior to acetylation to eremofortin A by the acetyltransferase ORF8 (PubMed:16345540, PubMed:24239699, PubMed:27921136). The second epoxidation may be performed by a second P450 monooxygenase (PubMed:24239699). After the acetylation step, eremofortin A is converted to eremofortin C and then to PR-toxin (PubMed:24239699). First the conversion of eremofortin A to eremofortin C proceeds by oxidation of the side chain of the molecule at C-12 and is catalyzed by the short-chain oxidoreductase prx1 (PubMed:16345540, PubMed:24239699). The cytochrome P450 monooxygenase ORF6 is probably also involved in this step (PubMed:27921136). The primary alcohol formed at C-12 is finally oxidized by the short-chain alcohol dehydrogenase prx4 that forms PR-toxin (PubMed:16345540, PubMed:24239699).</text>
</comment>
<comment type="pathway">
    <text evidence="7 15">Sesquiterpene biosynthesis.</text>
</comment>
<comment type="disruption phenotype">
    <text evidence="7">Reduces the production of PR-toxin and leads to a large increase in mycophenolic acid production.</text>
</comment>
<comment type="similarity">
    <text evidence="13">Belongs to the oxygen-dependent FAD-linked oxidoreductase family.</text>
</comment>
<gene>
    <name evidence="11" type="primary">prx3</name>
    <name evidence="12" type="synonym">ORF3</name>
</gene>